<reference key="1">
    <citation type="journal article" date="2005" name="J. Bacteriol.">
        <title>Insights on evolution of virulence and resistance from the complete genome analysis of an early methicillin-resistant Staphylococcus aureus strain and a biofilm-producing methicillin-resistant Staphylococcus epidermidis strain.</title>
        <authorList>
            <person name="Gill S.R."/>
            <person name="Fouts D.E."/>
            <person name="Archer G.L."/>
            <person name="Mongodin E.F."/>
            <person name="DeBoy R.T."/>
            <person name="Ravel J."/>
            <person name="Paulsen I.T."/>
            <person name="Kolonay J.F."/>
            <person name="Brinkac L.M."/>
            <person name="Beanan M.J."/>
            <person name="Dodson R.J."/>
            <person name="Daugherty S.C."/>
            <person name="Madupu R."/>
            <person name="Angiuoli S.V."/>
            <person name="Durkin A.S."/>
            <person name="Haft D.H."/>
            <person name="Vamathevan J.J."/>
            <person name="Khouri H."/>
            <person name="Utterback T.R."/>
            <person name="Lee C."/>
            <person name="Dimitrov G."/>
            <person name="Jiang L."/>
            <person name="Qin H."/>
            <person name="Weidman J."/>
            <person name="Tran K."/>
            <person name="Kang K.H."/>
            <person name="Hance I.R."/>
            <person name="Nelson K.E."/>
            <person name="Fraser C.M."/>
        </authorList>
    </citation>
    <scope>NUCLEOTIDE SEQUENCE [LARGE SCALE GENOMIC DNA]</scope>
    <source>
        <strain>ATCC 35984 / DSM 28319 / BCRC 17069 / CCUG 31568 / BM 3577 / RP62A</strain>
    </source>
</reference>
<feature type="chain" id="PRO_0000083566" description="Isocitrate dehydrogenase [NADP]">
    <location>
        <begin position="1"/>
        <end position="422"/>
    </location>
</feature>
<feature type="binding site" evidence="1">
    <location>
        <position position="94"/>
    </location>
    <ligand>
        <name>NADP(+)</name>
        <dbReference type="ChEBI" id="CHEBI:58349"/>
    </ligand>
</feature>
<feature type="binding site" evidence="1">
    <location>
        <position position="103"/>
    </location>
    <ligand>
        <name>D-threo-isocitrate</name>
        <dbReference type="ChEBI" id="CHEBI:15562"/>
    </ligand>
</feature>
<feature type="binding site" evidence="1">
    <location>
        <position position="105"/>
    </location>
    <ligand>
        <name>D-threo-isocitrate</name>
        <dbReference type="ChEBI" id="CHEBI:15562"/>
    </ligand>
</feature>
<feature type="binding site" evidence="1">
    <location>
        <position position="109"/>
    </location>
    <ligand>
        <name>D-threo-isocitrate</name>
        <dbReference type="ChEBI" id="CHEBI:15562"/>
    </ligand>
</feature>
<feature type="binding site" evidence="1">
    <location>
        <position position="119"/>
    </location>
    <ligand>
        <name>D-threo-isocitrate</name>
        <dbReference type="ChEBI" id="CHEBI:15562"/>
    </ligand>
</feature>
<feature type="binding site" evidence="1">
    <location>
        <position position="143"/>
    </location>
    <ligand>
        <name>D-threo-isocitrate</name>
        <dbReference type="ChEBI" id="CHEBI:15562"/>
    </ligand>
</feature>
<feature type="binding site" evidence="1">
    <location>
        <position position="310"/>
    </location>
    <ligand>
        <name>Mg(2+)</name>
        <dbReference type="ChEBI" id="CHEBI:18420"/>
    </ligand>
</feature>
<feature type="binding site" evidence="1">
    <location>
        <begin position="344"/>
        <end position="350"/>
    </location>
    <ligand>
        <name>NADP(+)</name>
        <dbReference type="ChEBI" id="CHEBI:58349"/>
    </ligand>
</feature>
<feature type="binding site" evidence="1">
    <location>
        <position position="357"/>
    </location>
    <ligand>
        <name>NADP(+)</name>
        <dbReference type="ChEBI" id="CHEBI:58349"/>
    </ligand>
</feature>
<feature type="binding site" evidence="1">
    <location>
        <position position="396"/>
    </location>
    <ligand>
        <name>NADP(+)</name>
        <dbReference type="ChEBI" id="CHEBI:58349"/>
    </ligand>
</feature>
<feature type="binding site" evidence="1">
    <location>
        <position position="400"/>
    </location>
    <ligand>
        <name>NADP(+)</name>
        <dbReference type="ChEBI" id="CHEBI:58349"/>
    </ligand>
</feature>
<feature type="site" description="Critical for catalysis" evidence="1">
    <location>
        <position position="150"/>
    </location>
</feature>
<feature type="site" description="Critical for catalysis" evidence="1">
    <location>
        <position position="220"/>
    </location>
</feature>
<protein>
    <recommendedName>
        <fullName>Isocitrate dehydrogenase [NADP]</fullName>
        <shortName>IDH</shortName>
        <ecNumber evidence="1">1.1.1.42</ecNumber>
    </recommendedName>
    <alternativeName>
        <fullName>IDP</fullName>
    </alternativeName>
    <alternativeName>
        <fullName>NADP(+)-specific ICDH</fullName>
    </alternativeName>
    <alternativeName>
        <fullName>Oxalosuccinate decarboxylase</fullName>
    </alternativeName>
</protein>
<comment type="function">
    <text evidence="1">Catalyzes the oxidative decarboxylation of isocitrate to 2-oxoglutarate and carbon dioxide with the concomitant reduction of NADP(+).</text>
</comment>
<comment type="catalytic activity">
    <reaction evidence="1">
        <text>D-threo-isocitrate + NADP(+) = 2-oxoglutarate + CO2 + NADPH</text>
        <dbReference type="Rhea" id="RHEA:19629"/>
        <dbReference type="ChEBI" id="CHEBI:15562"/>
        <dbReference type="ChEBI" id="CHEBI:16526"/>
        <dbReference type="ChEBI" id="CHEBI:16810"/>
        <dbReference type="ChEBI" id="CHEBI:57783"/>
        <dbReference type="ChEBI" id="CHEBI:58349"/>
        <dbReference type="EC" id="1.1.1.42"/>
    </reaction>
</comment>
<comment type="cofactor">
    <cofactor evidence="1">
        <name>Mg(2+)</name>
        <dbReference type="ChEBI" id="CHEBI:18420"/>
    </cofactor>
    <cofactor evidence="1">
        <name>Mn(2+)</name>
        <dbReference type="ChEBI" id="CHEBI:29035"/>
    </cofactor>
    <text evidence="1">Binds 1 Mg(2+) or Mn(2+) ion per subunit.</text>
</comment>
<comment type="subunit">
    <text evidence="1">Homodimer.</text>
</comment>
<comment type="similarity">
    <text evidence="2">Belongs to the isocitrate and isopropylmalate dehydrogenases family.</text>
</comment>
<evidence type="ECO:0000250" key="1">
    <source>
        <dbReference type="UniProtKB" id="P08200"/>
    </source>
</evidence>
<evidence type="ECO:0000305" key="2"/>
<gene>
    <name type="primary">icd</name>
    <name type="synonym">citC</name>
    <name type="ordered locus">SERP1257</name>
</gene>
<proteinExistence type="inferred from homology"/>
<dbReference type="EC" id="1.1.1.42" evidence="1"/>
<dbReference type="EMBL" id="CP000029">
    <property type="protein sequence ID" value="AAW54629.1"/>
    <property type="molecule type" value="Genomic_DNA"/>
</dbReference>
<dbReference type="RefSeq" id="WP_001830826.1">
    <property type="nucleotide sequence ID" value="NC_002976.3"/>
</dbReference>
<dbReference type="SMR" id="Q5HNL1"/>
<dbReference type="STRING" id="176279.SERP1257"/>
<dbReference type="GeneID" id="50018516"/>
<dbReference type="KEGG" id="ser:SERP1257"/>
<dbReference type="eggNOG" id="COG0538">
    <property type="taxonomic scope" value="Bacteria"/>
</dbReference>
<dbReference type="HOGENOM" id="CLU_031953_7_1_9"/>
<dbReference type="Proteomes" id="UP000000531">
    <property type="component" value="Chromosome"/>
</dbReference>
<dbReference type="GO" id="GO:0004450">
    <property type="term" value="F:isocitrate dehydrogenase (NADP+) activity"/>
    <property type="evidence" value="ECO:0007669"/>
    <property type="project" value="UniProtKB-EC"/>
</dbReference>
<dbReference type="GO" id="GO:0000287">
    <property type="term" value="F:magnesium ion binding"/>
    <property type="evidence" value="ECO:0007669"/>
    <property type="project" value="InterPro"/>
</dbReference>
<dbReference type="GO" id="GO:0051287">
    <property type="term" value="F:NAD binding"/>
    <property type="evidence" value="ECO:0007669"/>
    <property type="project" value="InterPro"/>
</dbReference>
<dbReference type="GO" id="GO:0006097">
    <property type="term" value="P:glyoxylate cycle"/>
    <property type="evidence" value="ECO:0007669"/>
    <property type="project" value="UniProtKB-KW"/>
</dbReference>
<dbReference type="GO" id="GO:0006099">
    <property type="term" value="P:tricarboxylic acid cycle"/>
    <property type="evidence" value="ECO:0007669"/>
    <property type="project" value="UniProtKB-KW"/>
</dbReference>
<dbReference type="Gene3D" id="3.40.718.10">
    <property type="entry name" value="Isopropylmalate Dehydrogenase"/>
    <property type="match status" value="1"/>
</dbReference>
<dbReference type="InterPro" id="IPR019818">
    <property type="entry name" value="IsoCit/isopropylmalate_DH_CS"/>
</dbReference>
<dbReference type="InterPro" id="IPR004439">
    <property type="entry name" value="Isocitrate_DH_NADP_dimer_prok"/>
</dbReference>
<dbReference type="InterPro" id="IPR024084">
    <property type="entry name" value="IsoPropMal-DH-like_dom"/>
</dbReference>
<dbReference type="NCBIfam" id="NF005425">
    <property type="entry name" value="PRK07006.1"/>
    <property type="match status" value="1"/>
</dbReference>
<dbReference type="NCBIfam" id="TIGR00183">
    <property type="entry name" value="prok_nadp_idh"/>
    <property type="match status" value="1"/>
</dbReference>
<dbReference type="PANTHER" id="PTHR43504">
    <property type="entry name" value="ISOCITRATE DEHYDROGENASE [NADP]"/>
    <property type="match status" value="1"/>
</dbReference>
<dbReference type="PANTHER" id="PTHR43504:SF1">
    <property type="entry name" value="ISOCITRATE DEHYDROGENASE [NADP]"/>
    <property type="match status" value="1"/>
</dbReference>
<dbReference type="Pfam" id="PF00180">
    <property type="entry name" value="Iso_dh"/>
    <property type="match status" value="1"/>
</dbReference>
<dbReference type="SMART" id="SM01329">
    <property type="entry name" value="Iso_dh"/>
    <property type="match status" value="1"/>
</dbReference>
<dbReference type="SUPFAM" id="SSF53659">
    <property type="entry name" value="Isocitrate/Isopropylmalate dehydrogenase-like"/>
    <property type="match status" value="1"/>
</dbReference>
<dbReference type="PROSITE" id="PS00470">
    <property type="entry name" value="IDH_IMDH"/>
    <property type="match status" value="1"/>
</dbReference>
<sequence>MSAEKITQSKDGLNVPNEPIIPFIIGDGIGPDIWKAASRVIDAAVEKAYNGEKRIEWKEVLAGQKAYDETGEWLPQETLETIKEYLIAVKGPLTTPIGGGIRSLNVALRQELDLFTCLRPVRWFKGVPSPVKRPEDVDMVIFRENTEDIYAGIEFKQGTSEVKKVIDFLQNEMGATNIRFPETSGIGIKPVSKEGTERLVRAAIQYALDNNRKSVTLVHKGNIMKFTEGSFKQWGYDLAHNEFGDKVFTWQQYDEIVEQKGKDAANEAQSKAEQEGKIIIKDSIADIFLQQILTRPAEHDVVATMNLNGDYISDALAAQVGGIGIAPGANINYETGHAIFEATHGTAPKYAGLNKVNPSSEILSSVLMLEHLGWQEAADKITDSIEATIASKIVTYDFARLMDGAKEVSTSDFADELIKNIR</sequence>
<accession>Q5HNL1</accession>
<organism>
    <name type="scientific">Staphylococcus epidermidis (strain ATCC 35984 / DSM 28319 / BCRC 17069 / CCUG 31568 / BM 3577 / RP62A)</name>
    <dbReference type="NCBI Taxonomy" id="176279"/>
    <lineage>
        <taxon>Bacteria</taxon>
        <taxon>Bacillati</taxon>
        <taxon>Bacillota</taxon>
        <taxon>Bacilli</taxon>
        <taxon>Bacillales</taxon>
        <taxon>Staphylococcaceae</taxon>
        <taxon>Staphylococcus</taxon>
    </lineage>
</organism>
<name>IDH_STAEQ</name>
<keyword id="KW-0329">Glyoxylate bypass</keyword>
<keyword id="KW-0460">Magnesium</keyword>
<keyword id="KW-0464">Manganese</keyword>
<keyword id="KW-0479">Metal-binding</keyword>
<keyword id="KW-0521">NADP</keyword>
<keyword id="KW-0560">Oxidoreductase</keyword>
<keyword id="KW-1185">Reference proteome</keyword>
<keyword id="KW-0816">Tricarboxylic acid cycle</keyword>